<protein>
    <recommendedName>
        <fullName evidence="1">Potassium-transporting ATPase potassium-binding subunit</fullName>
    </recommendedName>
    <alternativeName>
        <fullName evidence="1">ATP phosphohydrolase [potassium-transporting] A chain</fullName>
    </alternativeName>
    <alternativeName>
        <fullName evidence="1">Potassium-binding and translocating subunit A</fullName>
    </alternativeName>
    <alternativeName>
        <fullName evidence="1">Potassium-translocating ATPase A chain</fullName>
    </alternativeName>
</protein>
<dbReference type="EMBL" id="AL445067">
    <property type="protein sequence ID" value="CAC12431.1"/>
    <property type="molecule type" value="Genomic_DNA"/>
</dbReference>
<dbReference type="RefSeq" id="WP_010901716.1">
    <property type="nucleotide sequence ID" value="NC_002578.1"/>
</dbReference>
<dbReference type="SMR" id="P57685"/>
<dbReference type="STRING" id="273075.gene:9572533"/>
<dbReference type="PaxDb" id="273075-Ta1310"/>
<dbReference type="EnsemblBacteria" id="CAC12431">
    <property type="protein sequence ID" value="CAC12431"/>
    <property type="gene ID" value="CAC12431"/>
</dbReference>
<dbReference type="KEGG" id="tac:Ta1310"/>
<dbReference type="eggNOG" id="arCOG04804">
    <property type="taxonomic scope" value="Archaea"/>
</dbReference>
<dbReference type="HOGENOM" id="CLU_018614_3_0_2"/>
<dbReference type="InParanoid" id="P57685"/>
<dbReference type="OrthoDB" id="56688at2157"/>
<dbReference type="Proteomes" id="UP000001024">
    <property type="component" value="Chromosome"/>
</dbReference>
<dbReference type="GO" id="GO:0005886">
    <property type="term" value="C:plasma membrane"/>
    <property type="evidence" value="ECO:0007669"/>
    <property type="project" value="UniProtKB-SubCell"/>
</dbReference>
<dbReference type="GO" id="GO:0008556">
    <property type="term" value="F:P-type potassium transmembrane transporter activity"/>
    <property type="evidence" value="ECO:0007669"/>
    <property type="project" value="InterPro"/>
</dbReference>
<dbReference type="GO" id="GO:0030955">
    <property type="term" value="F:potassium ion binding"/>
    <property type="evidence" value="ECO:0007669"/>
    <property type="project" value="UniProtKB-UniRule"/>
</dbReference>
<dbReference type="HAMAP" id="MF_00275">
    <property type="entry name" value="KdpA"/>
    <property type="match status" value="1"/>
</dbReference>
<dbReference type="InterPro" id="IPR004623">
    <property type="entry name" value="KdpA"/>
</dbReference>
<dbReference type="NCBIfam" id="TIGR00680">
    <property type="entry name" value="kdpA"/>
    <property type="match status" value="1"/>
</dbReference>
<dbReference type="PANTHER" id="PTHR30607">
    <property type="entry name" value="POTASSIUM-TRANSPORTING ATPASE A CHAIN"/>
    <property type="match status" value="1"/>
</dbReference>
<dbReference type="PANTHER" id="PTHR30607:SF2">
    <property type="entry name" value="POTASSIUM-TRANSPORTING ATPASE POTASSIUM-BINDING SUBUNIT"/>
    <property type="match status" value="1"/>
</dbReference>
<dbReference type="Pfam" id="PF03814">
    <property type="entry name" value="KdpA"/>
    <property type="match status" value="1"/>
</dbReference>
<dbReference type="PIRSF" id="PIRSF001294">
    <property type="entry name" value="K_ATPaseA"/>
    <property type="match status" value="1"/>
</dbReference>
<proteinExistence type="inferred from homology"/>
<evidence type="ECO:0000255" key="1">
    <source>
        <dbReference type="HAMAP-Rule" id="MF_00275"/>
    </source>
</evidence>
<sequence length="585" mass="64845">MNLIEYEAYFWAKFFVAERAVSGVIIILIYLIIASVLAYILSFHIAKIYLDEKTVFSKITGRIISFFERMIGESPDHGMTFKEYFINLLLFNFFAGLISFLVIMFQKYLPFSYDTVGMSPSLDFNTVVSFLTNTNLQHYSNPMRLSYFSQTFVITGLMFLSAGTGFAASMAFVRGIRTDTGNIGNFYHDFLVSIFDLILPLTVILTVILILAGIPETMQRYITVNAFLTNKVYNIPLGPVATLEAIKNIGTNGGGFYGANAAYPFENPDWFTNLVEFVSFVIIPLASLISLGIVFGDRKFGRMLYWVVMFFFIFDALFAFFGEFAGVPFLHLGYYTGNMVGKETAIGISQSTIFAVGATITSTGASNAALVSYTPAGIIGVLIGLLLNDPLGGVGTGVLNIFMYIIFTVFIASLMVGKLPEIMSLRISSKEIKYSTLSLITHPLLVVIPLGITLMIPHLMSSFVNPESSRITELLYEFASAASNNGSEMGGFITNQPFFNYLDGVLMLLGRYLLMAFQLIIAQSFSVKKAKAQYYRSIDTSNWIFGVLLIAAMILIGLLSYFPIIVLGPLLSWAHDFNLILEAMV</sequence>
<reference key="1">
    <citation type="journal article" date="2000" name="Nature">
        <title>The genome sequence of the thermoacidophilic scavenger Thermoplasma acidophilum.</title>
        <authorList>
            <person name="Ruepp A."/>
            <person name="Graml W."/>
            <person name="Santos-Martinez M.-L."/>
            <person name="Koretke K.K."/>
            <person name="Volker C."/>
            <person name="Mewes H.-W."/>
            <person name="Frishman D."/>
            <person name="Stocker S."/>
            <person name="Lupas A.N."/>
            <person name="Baumeister W."/>
        </authorList>
    </citation>
    <scope>NUCLEOTIDE SEQUENCE [LARGE SCALE GENOMIC DNA]</scope>
    <source>
        <strain>ATCC 25905 / DSM 1728 / JCM 9062 / NBRC 15155 / AMRC-C165</strain>
    </source>
</reference>
<gene>
    <name evidence="1" type="primary">kdpA</name>
    <name type="ordered locus">Ta1310</name>
</gene>
<name>KDPA_THEAC</name>
<organism>
    <name type="scientific">Thermoplasma acidophilum (strain ATCC 25905 / DSM 1728 / JCM 9062 / NBRC 15155 / AMRC-C165)</name>
    <dbReference type="NCBI Taxonomy" id="273075"/>
    <lineage>
        <taxon>Archaea</taxon>
        <taxon>Methanobacteriati</taxon>
        <taxon>Thermoplasmatota</taxon>
        <taxon>Thermoplasmata</taxon>
        <taxon>Thermoplasmatales</taxon>
        <taxon>Thermoplasmataceae</taxon>
        <taxon>Thermoplasma</taxon>
    </lineage>
</organism>
<accession>P57685</accession>
<keyword id="KW-1003">Cell membrane</keyword>
<keyword id="KW-0406">Ion transport</keyword>
<keyword id="KW-0472">Membrane</keyword>
<keyword id="KW-0630">Potassium</keyword>
<keyword id="KW-0633">Potassium transport</keyword>
<keyword id="KW-1185">Reference proteome</keyword>
<keyword id="KW-0812">Transmembrane</keyword>
<keyword id="KW-1133">Transmembrane helix</keyword>
<keyword id="KW-0813">Transport</keyword>
<feature type="chain" id="PRO_0000166542" description="Potassium-transporting ATPase potassium-binding subunit">
    <location>
        <begin position="1"/>
        <end position="585"/>
    </location>
</feature>
<feature type="transmembrane region" description="Helical" evidence="1">
    <location>
        <begin position="23"/>
        <end position="43"/>
    </location>
</feature>
<feature type="transmembrane region" description="Helical" evidence="1">
    <location>
        <begin position="85"/>
        <end position="105"/>
    </location>
</feature>
<feature type="transmembrane region" description="Helical" evidence="1">
    <location>
        <begin position="152"/>
        <end position="172"/>
    </location>
</feature>
<feature type="transmembrane region" description="Helical" evidence="1">
    <location>
        <begin position="194"/>
        <end position="214"/>
    </location>
</feature>
<feature type="transmembrane region" description="Helical" evidence="1">
    <location>
        <begin position="275"/>
        <end position="295"/>
    </location>
</feature>
<feature type="transmembrane region" description="Helical" evidence="1">
    <location>
        <begin position="307"/>
        <end position="327"/>
    </location>
</feature>
<feature type="transmembrane region" description="Helical" evidence="1">
    <location>
        <begin position="345"/>
        <end position="365"/>
    </location>
</feature>
<feature type="transmembrane region" description="Helical" evidence="1">
    <location>
        <begin position="367"/>
        <end position="387"/>
    </location>
</feature>
<feature type="transmembrane region" description="Helical" evidence="1">
    <location>
        <begin position="397"/>
        <end position="417"/>
    </location>
</feature>
<feature type="transmembrane region" description="Helical" evidence="1">
    <location>
        <begin position="444"/>
        <end position="464"/>
    </location>
</feature>
<feature type="transmembrane region" description="Helical" evidence="1">
    <location>
        <begin position="502"/>
        <end position="522"/>
    </location>
</feature>
<feature type="transmembrane region" description="Helical" evidence="1">
    <location>
        <begin position="547"/>
        <end position="567"/>
    </location>
</feature>
<comment type="function">
    <text evidence="1">Part of the high-affinity ATP-driven potassium transport (or Kdp) system, which catalyzes the hydrolysis of ATP coupled with the electrogenic transport of potassium into the cytoplasm. This subunit binds the extracellular potassium ions and delivers the ions to the membrane domain of KdpB through an intramembrane tunnel.</text>
</comment>
<comment type="subunit">
    <text evidence="1">The system is composed of three essential subunits: KdpA, KdpB and KdpC.</text>
</comment>
<comment type="subcellular location">
    <subcellularLocation>
        <location evidence="1">Cell membrane</location>
        <topology evidence="1">Multi-pass membrane protein</topology>
    </subcellularLocation>
</comment>
<comment type="similarity">
    <text evidence="1">Belongs to the KdpA family.</text>
</comment>